<feature type="chain" id="PRO_0000237871" description="Shikimate kinase">
    <location>
        <begin position="1"/>
        <end position="176"/>
    </location>
</feature>
<feature type="binding site" evidence="1">
    <location>
        <begin position="14"/>
        <end position="19"/>
    </location>
    <ligand>
        <name>ATP</name>
        <dbReference type="ChEBI" id="CHEBI:30616"/>
    </ligand>
</feature>
<feature type="binding site" evidence="1">
    <location>
        <position position="18"/>
    </location>
    <ligand>
        <name>Mg(2+)</name>
        <dbReference type="ChEBI" id="CHEBI:18420"/>
    </ligand>
</feature>
<feature type="binding site" evidence="1">
    <location>
        <position position="36"/>
    </location>
    <ligand>
        <name>substrate</name>
    </ligand>
</feature>
<feature type="binding site" evidence="1">
    <location>
        <position position="60"/>
    </location>
    <ligand>
        <name>substrate</name>
    </ligand>
</feature>
<feature type="binding site" evidence="1">
    <location>
        <position position="82"/>
    </location>
    <ligand>
        <name>substrate</name>
    </ligand>
</feature>
<feature type="binding site" evidence="1">
    <location>
        <position position="120"/>
    </location>
    <ligand>
        <name>ATP</name>
        <dbReference type="ChEBI" id="CHEBI:30616"/>
    </ligand>
</feature>
<feature type="binding site" evidence="1">
    <location>
        <position position="138"/>
    </location>
    <ligand>
        <name>substrate</name>
    </ligand>
</feature>
<accession>Q3Z991</accession>
<evidence type="ECO:0000255" key="1">
    <source>
        <dbReference type="HAMAP-Rule" id="MF_00109"/>
    </source>
</evidence>
<proteinExistence type="inferred from homology"/>
<organism>
    <name type="scientific">Dehalococcoides mccartyi (strain ATCC BAA-2266 / KCTC 15142 / 195)</name>
    <name type="common">Dehalococcoides ethenogenes (strain 195)</name>
    <dbReference type="NCBI Taxonomy" id="243164"/>
    <lineage>
        <taxon>Bacteria</taxon>
        <taxon>Bacillati</taxon>
        <taxon>Chloroflexota</taxon>
        <taxon>Dehalococcoidia</taxon>
        <taxon>Dehalococcoidales</taxon>
        <taxon>Dehalococcoidaceae</taxon>
        <taxon>Dehalococcoides</taxon>
    </lineage>
</organism>
<comment type="function">
    <text evidence="1">Catalyzes the specific phosphorylation of the 3-hydroxyl group of shikimic acid using ATP as a cosubstrate.</text>
</comment>
<comment type="catalytic activity">
    <reaction evidence="1">
        <text>shikimate + ATP = 3-phosphoshikimate + ADP + H(+)</text>
        <dbReference type="Rhea" id="RHEA:13121"/>
        <dbReference type="ChEBI" id="CHEBI:15378"/>
        <dbReference type="ChEBI" id="CHEBI:30616"/>
        <dbReference type="ChEBI" id="CHEBI:36208"/>
        <dbReference type="ChEBI" id="CHEBI:145989"/>
        <dbReference type="ChEBI" id="CHEBI:456216"/>
        <dbReference type="EC" id="2.7.1.71"/>
    </reaction>
</comment>
<comment type="cofactor">
    <cofactor evidence="1">
        <name>Mg(2+)</name>
        <dbReference type="ChEBI" id="CHEBI:18420"/>
    </cofactor>
    <text evidence="1">Binds 1 Mg(2+) ion per subunit.</text>
</comment>
<comment type="pathway">
    <text evidence="1">Metabolic intermediate biosynthesis; chorismate biosynthesis; chorismate from D-erythrose 4-phosphate and phosphoenolpyruvate: step 5/7.</text>
</comment>
<comment type="subunit">
    <text evidence="1">Monomer.</text>
</comment>
<comment type="subcellular location">
    <subcellularLocation>
        <location evidence="1">Cytoplasm</location>
    </subcellularLocation>
</comment>
<comment type="similarity">
    <text evidence="1">Belongs to the shikimate kinase family.</text>
</comment>
<protein>
    <recommendedName>
        <fullName evidence="1">Shikimate kinase</fullName>
        <shortName evidence="1">SK</shortName>
        <ecNumber evidence="1">2.7.1.71</ecNumber>
    </recommendedName>
</protein>
<sequence length="176" mass="19950">MKIKNNIALIGFMGAGKSSVSKLLSERLGKTLVSTDACIETREGLSIISIFKEKGEDYFRQMESRVLEDLCRQSGQIIDCGGGIVMRPPNLSLMRLNCLVIYLESRPEDLEARLKNHTNRPLYNAERLDKMLKLLESRLPLYRAAANITISTHNKSCHEVCEEIEDKLREYENTSG</sequence>
<name>AROK_DEHM1</name>
<dbReference type="EC" id="2.7.1.71" evidence="1"/>
<dbReference type="EMBL" id="CP000027">
    <property type="protein sequence ID" value="AAW40207.1"/>
    <property type="molecule type" value="Genomic_DNA"/>
</dbReference>
<dbReference type="RefSeq" id="WP_010936241.1">
    <property type="nucleotide sequence ID" value="NC_002936.3"/>
</dbReference>
<dbReference type="SMR" id="Q3Z991"/>
<dbReference type="FunCoup" id="Q3Z991">
    <property type="interactions" value="292"/>
</dbReference>
<dbReference type="STRING" id="243164.DET0464"/>
<dbReference type="GeneID" id="3230171"/>
<dbReference type="KEGG" id="det:DET0464"/>
<dbReference type="PATRIC" id="fig|243164.10.peg.442"/>
<dbReference type="eggNOG" id="COG0703">
    <property type="taxonomic scope" value="Bacteria"/>
</dbReference>
<dbReference type="HOGENOM" id="CLU_057607_4_0_0"/>
<dbReference type="InParanoid" id="Q3Z991"/>
<dbReference type="UniPathway" id="UPA00053">
    <property type="reaction ID" value="UER00088"/>
</dbReference>
<dbReference type="Proteomes" id="UP000008289">
    <property type="component" value="Chromosome"/>
</dbReference>
<dbReference type="GO" id="GO:0005829">
    <property type="term" value="C:cytosol"/>
    <property type="evidence" value="ECO:0007669"/>
    <property type="project" value="TreeGrafter"/>
</dbReference>
<dbReference type="GO" id="GO:0005524">
    <property type="term" value="F:ATP binding"/>
    <property type="evidence" value="ECO:0007669"/>
    <property type="project" value="UniProtKB-UniRule"/>
</dbReference>
<dbReference type="GO" id="GO:0000287">
    <property type="term" value="F:magnesium ion binding"/>
    <property type="evidence" value="ECO:0007669"/>
    <property type="project" value="UniProtKB-UniRule"/>
</dbReference>
<dbReference type="GO" id="GO:0004765">
    <property type="term" value="F:shikimate kinase activity"/>
    <property type="evidence" value="ECO:0007669"/>
    <property type="project" value="UniProtKB-UniRule"/>
</dbReference>
<dbReference type="GO" id="GO:0008652">
    <property type="term" value="P:amino acid biosynthetic process"/>
    <property type="evidence" value="ECO:0007669"/>
    <property type="project" value="UniProtKB-KW"/>
</dbReference>
<dbReference type="GO" id="GO:0009073">
    <property type="term" value="P:aromatic amino acid family biosynthetic process"/>
    <property type="evidence" value="ECO:0007669"/>
    <property type="project" value="UniProtKB-KW"/>
</dbReference>
<dbReference type="GO" id="GO:0009423">
    <property type="term" value="P:chorismate biosynthetic process"/>
    <property type="evidence" value="ECO:0007669"/>
    <property type="project" value="UniProtKB-UniRule"/>
</dbReference>
<dbReference type="CDD" id="cd00464">
    <property type="entry name" value="SK"/>
    <property type="match status" value="1"/>
</dbReference>
<dbReference type="Gene3D" id="3.40.50.300">
    <property type="entry name" value="P-loop containing nucleotide triphosphate hydrolases"/>
    <property type="match status" value="1"/>
</dbReference>
<dbReference type="HAMAP" id="MF_00109">
    <property type="entry name" value="Shikimate_kinase"/>
    <property type="match status" value="1"/>
</dbReference>
<dbReference type="InterPro" id="IPR027417">
    <property type="entry name" value="P-loop_NTPase"/>
</dbReference>
<dbReference type="InterPro" id="IPR031322">
    <property type="entry name" value="Shikimate/glucono_kinase"/>
</dbReference>
<dbReference type="InterPro" id="IPR000623">
    <property type="entry name" value="Shikimate_kinase/TSH1"/>
</dbReference>
<dbReference type="PANTHER" id="PTHR21087">
    <property type="entry name" value="SHIKIMATE KINASE"/>
    <property type="match status" value="1"/>
</dbReference>
<dbReference type="PANTHER" id="PTHR21087:SF16">
    <property type="entry name" value="SHIKIMATE KINASE 1, CHLOROPLASTIC"/>
    <property type="match status" value="1"/>
</dbReference>
<dbReference type="Pfam" id="PF01202">
    <property type="entry name" value="SKI"/>
    <property type="match status" value="1"/>
</dbReference>
<dbReference type="PRINTS" id="PR01100">
    <property type="entry name" value="SHIKIMTKNASE"/>
</dbReference>
<dbReference type="SUPFAM" id="SSF52540">
    <property type="entry name" value="P-loop containing nucleoside triphosphate hydrolases"/>
    <property type="match status" value="1"/>
</dbReference>
<keyword id="KW-0028">Amino-acid biosynthesis</keyword>
<keyword id="KW-0057">Aromatic amino acid biosynthesis</keyword>
<keyword id="KW-0067">ATP-binding</keyword>
<keyword id="KW-0963">Cytoplasm</keyword>
<keyword id="KW-0418">Kinase</keyword>
<keyword id="KW-0460">Magnesium</keyword>
<keyword id="KW-0479">Metal-binding</keyword>
<keyword id="KW-0547">Nucleotide-binding</keyword>
<keyword id="KW-0808">Transferase</keyword>
<gene>
    <name evidence="1" type="primary">aroK</name>
    <name type="ordered locus">DET0464</name>
</gene>
<reference key="1">
    <citation type="journal article" date="2005" name="Science">
        <title>Genome sequence of the PCE-dechlorinating bacterium Dehalococcoides ethenogenes.</title>
        <authorList>
            <person name="Seshadri R."/>
            <person name="Adrian L."/>
            <person name="Fouts D.E."/>
            <person name="Eisen J.A."/>
            <person name="Phillippy A.M."/>
            <person name="Methe B.A."/>
            <person name="Ward N.L."/>
            <person name="Nelson W.C."/>
            <person name="DeBoy R.T."/>
            <person name="Khouri H.M."/>
            <person name="Kolonay J.F."/>
            <person name="Dodson R.J."/>
            <person name="Daugherty S.C."/>
            <person name="Brinkac L.M."/>
            <person name="Sullivan S.A."/>
            <person name="Madupu R."/>
            <person name="Nelson K.E."/>
            <person name="Kang K.H."/>
            <person name="Impraim M."/>
            <person name="Tran K."/>
            <person name="Robinson J.M."/>
            <person name="Forberger H.A."/>
            <person name="Fraser C.M."/>
            <person name="Zinder S.H."/>
            <person name="Heidelberg J.F."/>
        </authorList>
    </citation>
    <scope>NUCLEOTIDE SEQUENCE [LARGE SCALE GENOMIC DNA]</scope>
    <source>
        <strain>ATCC BAA-2266 / KCTC 15142 / 195</strain>
    </source>
</reference>